<protein>
    <recommendedName>
        <fullName>Alpha-2-HS-glycoprotein</fullName>
    </recommendedName>
    <alternativeName>
        <fullName>Fetuin-A</fullName>
    </alternativeName>
</protein>
<comment type="subcellular location">
    <subcellularLocation>
        <location evidence="1">Secreted</location>
    </subcellularLocation>
</comment>
<comment type="tissue specificity">
    <text evidence="3">Expressed in placenta, specifically the maternal caruncula tissue (MCT) and the fetal cotyledonary tissue (FCT) (at protein level).</text>
</comment>
<comment type="similarity">
    <text evidence="2">Belongs to the fetuin family.</text>
</comment>
<keyword id="KW-0903">Direct protein sequencing</keyword>
<keyword id="KW-0964">Secreted</keyword>
<reference evidence="5" key="1">
    <citation type="journal article" date="2014" name="Acta Vet. Scand.">
        <title>Identification of pregnancy-associated glycoproteins and alpha-fetoprotein in fallow deer (Dama dama) placenta.</title>
        <authorList>
            <person name="Beriot M."/>
            <person name="Tchimbou A.F."/>
            <person name="Barbato O."/>
            <person name="Beckers J.F."/>
            <person name="de Sousa N.M."/>
        </authorList>
    </citation>
    <scope>PROTEIN SEQUENCE</scope>
    <scope>TISSUE SPECIFICITY</scope>
    <source>
        <tissue>Fetal cotyledon</tissue>
        <tissue evidence="4">Placenta</tissue>
    </source>
</reference>
<accession>C0HJD1</accession>
<evidence type="ECO:0000250" key="1">
    <source>
        <dbReference type="UniProtKB" id="P29701"/>
    </source>
</evidence>
<evidence type="ECO:0000255" key="2"/>
<evidence type="ECO:0000269" key="3">
    <source>
    </source>
</evidence>
<evidence type="ECO:0000303" key="4">
    <source>
    </source>
</evidence>
<evidence type="ECO:0000305" key="5"/>
<organism>
    <name type="scientific">Dama dama</name>
    <name type="common">Fallow deer</name>
    <name type="synonym">Cervus dama</name>
    <dbReference type="NCBI Taxonomy" id="30532"/>
    <lineage>
        <taxon>Eukaryota</taxon>
        <taxon>Metazoa</taxon>
        <taxon>Chordata</taxon>
        <taxon>Craniata</taxon>
        <taxon>Vertebrata</taxon>
        <taxon>Euteleostomi</taxon>
        <taxon>Mammalia</taxon>
        <taxon>Eutheria</taxon>
        <taxon>Laurasiatheria</taxon>
        <taxon>Artiodactyla</taxon>
        <taxon>Ruminantia</taxon>
        <taxon>Pecora</taxon>
        <taxon>Cervidae</taxon>
        <taxon>Cervinae</taxon>
        <taxon>Dama</taxon>
    </lineage>
</organism>
<sequence length="11" mass="1219">IPLDTIAGYKE</sequence>
<dbReference type="GO" id="GO:0005576">
    <property type="term" value="C:extracellular region"/>
    <property type="evidence" value="ECO:0007669"/>
    <property type="project" value="UniProtKB-SubCell"/>
</dbReference>
<name>FETUA_DAMDA</name>
<feature type="chain" id="PRO_0000423394" description="Alpha-2-HS-glycoprotein" evidence="3">
    <location>
        <begin position="1"/>
        <end position="11" status="greater than"/>
    </location>
</feature>
<feature type="non-terminal residue" evidence="4">
    <location>
        <position position="11"/>
    </location>
</feature>
<proteinExistence type="evidence at protein level"/>